<gene>
    <name evidence="1" type="primary">trmFO</name>
    <name type="synonym">gid</name>
    <name type="ordered locus">SERP0817</name>
</gene>
<organism>
    <name type="scientific">Staphylococcus epidermidis (strain ATCC 35984 / DSM 28319 / BCRC 17069 / CCUG 31568 / BM 3577 / RP62A)</name>
    <dbReference type="NCBI Taxonomy" id="176279"/>
    <lineage>
        <taxon>Bacteria</taxon>
        <taxon>Bacillati</taxon>
        <taxon>Bacillota</taxon>
        <taxon>Bacilli</taxon>
        <taxon>Bacillales</taxon>
        <taxon>Staphylococcaceae</taxon>
        <taxon>Staphylococcus</taxon>
    </lineage>
</organism>
<protein>
    <recommendedName>
        <fullName evidence="1">Methylenetetrahydrofolate--tRNA-(uracil-5-)-methyltransferase TrmFO</fullName>
        <ecNumber evidence="1">2.1.1.74</ecNumber>
    </recommendedName>
    <alternativeName>
        <fullName evidence="1">Folate-dependent tRNA (uracil-5-)-methyltransferase</fullName>
    </alternativeName>
    <alternativeName>
        <fullName evidence="1">Folate-dependent tRNA(M-5-U54)-methyltransferase</fullName>
    </alternativeName>
</protein>
<feature type="chain" id="PRO_0000117266" description="Methylenetetrahydrofolate--tRNA-(uracil-5-)-methyltransferase TrmFO">
    <location>
        <begin position="1"/>
        <end position="435"/>
    </location>
</feature>
<feature type="binding site" evidence="1">
    <location>
        <begin position="9"/>
        <end position="14"/>
    </location>
    <ligand>
        <name>FAD</name>
        <dbReference type="ChEBI" id="CHEBI:57692"/>
    </ligand>
</feature>
<keyword id="KW-0963">Cytoplasm</keyword>
<keyword id="KW-0274">FAD</keyword>
<keyword id="KW-0285">Flavoprotein</keyword>
<keyword id="KW-0489">Methyltransferase</keyword>
<keyword id="KW-0520">NAD</keyword>
<keyword id="KW-0521">NADP</keyword>
<keyword id="KW-1185">Reference proteome</keyword>
<keyword id="KW-0808">Transferase</keyword>
<keyword id="KW-0819">tRNA processing</keyword>
<comment type="function">
    <text evidence="1">Catalyzes the folate-dependent formation of 5-methyl-uridine at position 54 (M-5-U54) in all tRNAs.</text>
</comment>
<comment type="catalytic activity">
    <reaction evidence="1">
        <text>uridine(54) in tRNA + (6R)-5,10-methylene-5,6,7,8-tetrahydrofolate + NADH + H(+) = 5-methyluridine(54) in tRNA + (6S)-5,6,7,8-tetrahydrofolate + NAD(+)</text>
        <dbReference type="Rhea" id="RHEA:16873"/>
        <dbReference type="Rhea" id="RHEA-COMP:10167"/>
        <dbReference type="Rhea" id="RHEA-COMP:10193"/>
        <dbReference type="ChEBI" id="CHEBI:15378"/>
        <dbReference type="ChEBI" id="CHEBI:15636"/>
        <dbReference type="ChEBI" id="CHEBI:57453"/>
        <dbReference type="ChEBI" id="CHEBI:57540"/>
        <dbReference type="ChEBI" id="CHEBI:57945"/>
        <dbReference type="ChEBI" id="CHEBI:65315"/>
        <dbReference type="ChEBI" id="CHEBI:74447"/>
        <dbReference type="EC" id="2.1.1.74"/>
    </reaction>
</comment>
<comment type="catalytic activity">
    <reaction evidence="1">
        <text>uridine(54) in tRNA + (6R)-5,10-methylene-5,6,7,8-tetrahydrofolate + NADPH + H(+) = 5-methyluridine(54) in tRNA + (6S)-5,6,7,8-tetrahydrofolate + NADP(+)</text>
        <dbReference type="Rhea" id="RHEA:62372"/>
        <dbReference type="Rhea" id="RHEA-COMP:10167"/>
        <dbReference type="Rhea" id="RHEA-COMP:10193"/>
        <dbReference type="ChEBI" id="CHEBI:15378"/>
        <dbReference type="ChEBI" id="CHEBI:15636"/>
        <dbReference type="ChEBI" id="CHEBI:57453"/>
        <dbReference type="ChEBI" id="CHEBI:57783"/>
        <dbReference type="ChEBI" id="CHEBI:58349"/>
        <dbReference type="ChEBI" id="CHEBI:65315"/>
        <dbReference type="ChEBI" id="CHEBI:74447"/>
        <dbReference type="EC" id="2.1.1.74"/>
    </reaction>
</comment>
<comment type="cofactor">
    <cofactor evidence="1">
        <name>FAD</name>
        <dbReference type="ChEBI" id="CHEBI:57692"/>
    </cofactor>
</comment>
<comment type="subcellular location">
    <subcellularLocation>
        <location evidence="1">Cytoplasm</location>
    </subcellularLocation>
</comment>
<comment type="similarity">
    <text evidence="1">Belongs to the MnmG family. TrmFO subfamily.</text>
</comment>
<accession>Q5HPU1</accession>
<reference key="1">
    <citation type="journal article" date="2005" name="J. Bacteriol.">
        <title>Insights on evolution of virulence and resistance from the complete genome analysis of an early methicillin-resistant Staphylococcus aureus strain and a biofilm-producing methicillin-resistant Staphylococcus epidermidis strain.</title>
        <authorList>
            <person name="Gill S.R."/>
            <person name="Fouts D.E."/>
            <person name="Archer G.L."/>
            <person name="Mongodin E.F."/>
            <person name="DeBoy R.T."/>
            <person name="Ravel J."/>
            <person name="Paulsen I.T."/>
            <person name="Kolonay J.F."/>
            <person name="Brinkac L.M."/>
            <person name="Beanan M.J."/>
            <person name="Dodson R.J."/>
            <person name="Daugherty S.C."/>
            <person name="Madupu R."/>
            <person name="Angiuoli S.V."/>
            <person name="Durkin A.S."/>
            <person name="Haft D.H."/>
            <person name="Vamathevan J.J."/>
            <person name="Khouri H."/>
            <person name="Utterback T.R."/>
            <person name="Lee C."/>
            <person name="Dimitrov G."/>
            <person name="Jiang L."/>
            <person name="Qin H."/>
            <person name="Weidman J."/>
            <person name="Tran K."/>
            <person name="Kang K.H."/>
            <person name="Hance I.R."/>
            <person name="Nelson K.E."/>
            <person name="Fraser C.M."/>
        </authorList>
    </citation>
    <scope>NUCLEOTIDE SEQUENCE [LARGE SCALE GENOMIC DNA]</scope>
    <source>
        <strain>ATCC 35984 / DSM 28319 / BCRC 17069 / CCUG 31568 / BM 3577 / RP62A</strain>
    </source>
</reference>
<evidence type="ECO:0000255" key="1">
    <source>
        <dbReference type="HAMAP-Rule" id="MF_01037"/>
    </source>
</evidence>
<dbReference type="EC" id="2.1.1.74" evidence="1"/>
<dbReference type="EMBL" id="CP000029">
    <property type="protein sequence ID" value="AAW54163.1"/>
    <property type="molecule type" value="Genomic_DNA"/>
</dbReference>
<dbReference type="RefSeq" id="WP_001832560.1">
    <property type="nucleotide sequence ID" value="NC_002976.3"/>
</dbReference>
<dbReference type="SMR" id="Q5HPU1"/>
<dbReference type="STRING" id="176279.SERP0817"/>
<dbReference type="GeneID" id="50018937"/>
<dbReference type="KEGG" id="ser:SERP0817"/>
<dbReference type="eggNOG" id="COG1206">
    <property type="taxonomic scope" value="Bacteria"/>
</dbReference>
<dbReference type="HOGENOM" id="CLU_033057_1_0_9"/>
<dbReference type="Proteomes" id="UP000000531">
    <property type="component" value="Chromosome"/>
</dbReference>
<dbReference type="GO" id="GO:0005829">
    <property type="term" value="C:cytosol"/>
    <property type="evidence" value="ECO:0007669"/>
    <property type="project" value="TreeGrafter"/>
</dbReference>
<dbReference type="GO" id="GO:0050660">
    <property type="term" value="F:flavin adenine dinucleotide binding"/>
    <property type="evidence" value="ECO:0007669"/>
    <property type="project" value="UniProtKB-UniRule"/>
</dbReference>
<dbReference type="GO" id="GO:0047151">
    <property type="term" value="F:tRNA (uracil(54)-C5)-methyltransferase activity, 5,10-methylenetetrahydrofolate-dependent"/>
    <property type="evidence" value="ECO:0007669"/>
    <property type="project" value="UniProtKB-UniRule"/>
</dbReference>
<dbReference type="GO" id="GO:0030488">
    <property type="term" value="P:tRNA methylation"/>
    <property type="evidence" value="ECO:0007669"/>
    <property type="project" value="TreeGrafter"/>
</dbReference>
<dbReference type="GO" id="GO:0002098">
    <property type="term" value="P:tRNA wobble uridine modification"/>
    <property type="evidence" value="ECO:0007669"/>
    <property type="project" value="TreeGrafter"/>
</dbReference>
<dbReference type="FunFam" id="3.50.50.60:FF:000035">
    <property type="entry name" value="Methylenetetrahydrofolate--tRNA-(uracil-5-)-methyltransferase TrmFO"/>
    <property type="match status" value="1"/>
</dbReference>
<dbReference type="FunFam" id="3.50.50.60:FF:000040">
    <property type="entry name" value="Methylenetetrahydrofolate--tRNA-(uracil-5-)-methyltransferase TrmFO"/>
    <property type="match status" value="1"/>
</dbReference>
<dbReference type="Gene3D" id="3.50.50.60">
    <property type="entry name" value="FAD/NAD(P)-binding domain"/>
    <property type="match status" value="2"/>
</dbReference>
<dbReference type="HAMAP" id="MF_01037">
    <property type="entry name" value="TrmFO"/>
    <property type="match status" value="1"/>
</dbReference>
<dbReference type="InterPro" id="IPR036188">
    <property type="entry name" value="FAD/NAD-bd_sf"/>
</dbReference>
<dbReference type="InterPro" id="IPR002218">
    <property type="entry name" value="MnmG-rel"/>
</dbReference>
<dbReference type="InterPro" id="IPR020595">
    <property type="entry name" value="MnmG-rel_CS"/>
</dbReference>
<dbReference type="InterPro" id="IPR040131">
    <property type="entry name" value="MnmG_N"/>
</dbReference>
<dbReference type="InterPro" id="IPR004417">
    <property type="entry name" value="TrmFO"/>
</dbReference>
<dbReference type="NCBIfam" id="TIGR00137">
    <property type="entry name" value="gid_trmFO"/>
    <property type="match status" value="1"/>
</dbReference>
<dbReference type="NCBIfam" id="NF003739">
    <property type="entry name" value="PRK05335.1"/>
    <property type="match status" value="1"/>
</dbReference>
<dbReference type="PANTHER" id="PTHR11806">
    <property type="entry name" value="GLUCOSE INHIBITED DIVISION PROTEIN A"/>
    <property type="match status" value="1"/>
</dbReference>
<dbReference type="PANTHER" id="PTHR11806:SF2">
    <property type="entry name" value="METHYLENETETRAHYDROFOLATE--TRNA-(URACIL-5-)-METHYLTRANSFERASE TRMFO"/>
    <property type="match status" value="1"/>
</dbReference>
<dbReference type="Pfam" id="PF01134">
    <property type="entry name" value="GIDA"/>
    <property type="match status" value="1"/>
</dbReference>
<dbReference type="SUPFAM" id="SSF51905">
    <property type="entry name" value="FAD/NAD(P)-binding domain"/>
    <property type="match status" value="1"/>
</dbReference>
<dbReference type="PROSITE" id="PS01281">
    <property type="entry name" value="GIDA_2"/>
    <property type="match status" value="1"/>
</dbReference>
<proteinExistence type="inferred from homology"/>
<sequence>MTQKVNVVGAGLAGSEAAYQLAQRGIKVNLIEMRPVKQTPAHHTDKFAELVCSNSLRGNALTNAVGVLKEEMRHLDSLIITSADKARVPAGGALAVDRHDFAGYITDTLRNHPNITVLNEEVNHIPEGYTIIATGPLTTEHLAQEIVDITGKDQLYFYDAAAPIIEKDSINMDKVYLKSRYDKGEAAYLNCPMTEEEFNRFYDAVLEAEVAPVNEFEKEKYFEGCMPFEVMAERGRKTLLFGPMKPVGLEDPKTGKRPYAVVQLRQDDAAGTLYNIVGFQTHLKWGAQKEVIRLIPGLENVDIVRYGVMHRNTFINSPDVLNEKYELKGHDNLYFAGQMTGVEGYVESAASGLVAGINLAHKILDKGEVIFPRETMIGSMAYYISHAKNEKNFQPMNANFGLLPSLEKRIKDKKERYETQAKRALEYLDNYKQTL</sequence>
<name>TRMFO_STAEQ</name>